<dbReference type="EMBL" id="BA000003">
    <property type="protein sequence ID" value="BAB13047.1"/>
    <property type="molecule type" value="Genomic_DNA"/>
</dbReference>
<dbReference type="RefSeq" id="NP_240161.1">
    <property type="nucleotide sequence ID" value="NC_002528.1"/>
</dbReference>
<dbReference type="RefSeq" id="WP_009874297.1">
    <property type="nucleotide sequence ID" value="NZ_AP036055.1"/>
</dbReference>
<dbReference type="SMR" id="P57424"/>
<dbReference type="STRING" id="563178.BUAP5A_336"/>
<dbReference type="EnsemblBacteria" id="BAB13047">
    <property type="protein sequence ID" value="BAB13047"/>
    <property type="gene ID" value="BAB13047"/>
</dbReference>
<dbReference type="KEGG" id="buc:BU342"/>
<dbReference type="PATRIC" id="fig|107806.10.peg.354"/>
<dbReference type="eggNOG" id="COG4786">
    <property type="taxonomic scope" value="Bacteria"/>
</dbReference>
<dbReference type="HOGENOM" id="CLU_013687_0_1_6"/>
<dbReference type="Proteomes" id="UP000001806">
    <property type="component" value="Chromosome"/>
</dbReference>
<dbReference type="GO" id="GO:0009426">
    <property type="term" value="C:bacterial-type flagellum basal body, distal rod"/>
    <property type="evidence" value="ECO:0007669"/>
    <property type="project" value="InterPro"/>
</dbReference>
<dbReference type="GO" id="GO:0071978">
    <property type="term" value="P:bacterial-type flagellum-dependent swarming motility"/>
    <property type="evidence" value="ECO:0007669"/>
    <property type="project" value="TreeGrafter"/>
</dbReference>
<dbReference type="InterPro" id="IPR001444">
    <property type="entry name" value="Flag_bb_rod_N"/>
</dbReference>
<dbReference type="InterPro" id="IPR019776">
    <property type="entry name" value="Flagellar_basal_body_rod_CS"/>
</dbReference>
<dbReference type="InterPro" id="IPR020013">
    <property type="entry name" value="Flagellar_FlgE/F/G"/>
</dbReference>
<dbReference type="InterPro" id="IPR010930">
    <property type="entry name" value="Flg_bb/hook_C_dom"/>
</dbReference>
<dbReference type="InterPro" id="IPR037925">
    <property type="entry name" value="FlgE/F/G-like"/>
</dbReference>
<dbReference type="InterPro" id="IPR012834">
    <property type="entry name" value="FlgG_G_neg"/>
</dbReference>
<dbReference type="InterPro" id="IPR053967">
    <property type="entry name" value="LlgE_F_G-like_D1"/>
</dbReference>
<dbReference type="NCBIfam" id="TIGR03506">
    <property type="entry name" value="FlgEFG_subfam"/>
    <property type="match status" value="2"/>
</dbReference>
<dbReference type="NCBIfam" id="TIGR02488">
    <property type="entry name" value="flgG_G_neg"/>
    <property type="match status" value="1"/>
</dbReference>
<dbReference type="PANTHER" id="PTHR30435:SF19">
    <property type="entry name" value="FLAGELLAR BASAL-BODY ROD PROTEIN FLGG"/>
    <property type="match status" value="1"/>
</dbReference>
<dbReference type="PANTHER" id="PTHR30435">
    <property type="entry name" value="FLAGELLAR PROTEIN"/>
    <property type="match status" value="1"/>
</dbReference>
<dbReference type="Pfam" id="PF00460">
    <property type="entry name" value="Flg_bb_rod"/>
    <property type="match status" value="1"/>
</dbReference>
<dbReference type="Pfam" id="PF06429">
    <property type="entry name" value="Flg_bbr_C"/>
    <property type="match status" value="1"/>
</dbReference>
<dbReference type="Pfam" id="PF22692">
    <property type="entry name" value="LlgE_F_G_D1"/>
    <property type="match status" value="1"/>
</dbReference>
<dbReference type="SUPFAM" id="SSF117143">
    <property type="entry name" value="Flagellar hook protein flgE"/>
    <property type="match status" value="1"/>
</dbReference>
<dbReference type="PROSITE" id="PS00588">
    <property type="entry name" value="FLAGELLA_BB_ROD"/>
    <property type="match status" value="1"/>
</dbReference>
<name>FLGG_BUCAI</name>
<evidence type="ECO:0000250" key="1"/>
<evidence type="ECO:0000305" key="2"/>
<comment type="subunit">
    <text evidence="1">The basal body constitutes a major portion of the flagellar organelle and consists of four rings (L,P,S, and M) mounted on a central rod. The rod consists of about 26 subunits of FlgG in the distal portion, and FlgB, FlgC and FlgF are thought to build up the proximal portion of the rod with about 6 subunits each (By similarity).</text>
</comment>
<comment type="subcellular location">
    <subcellularLocation>
        <location evidence="1">Bacterial flagellum basal body</location>
    </subcellularLocation>
</comment>
<comment type="similarity">
    <text evidence="2">Belongs to the flagella basal body rod proteins family.</text>
</comment>
<accession>P57424</accession>
<proteinExistence type="inferred from homology"/>
<keyword id="KW-0975">Bacterial flagellum</keyword>
<keyword id="KW-1185">Reference proteome</keyword>
<sequence>MIPSLWISKTGLDAQQINMNIISNNLANVSTNGFKRSRAVFEDLMYQTIREAGTNSSLETTLPSGLQLGTGVRPVSTERIHTQGNLSKTDASKDVAINGSGFFQVQLPDGNIAYTRDGSFQLDQNGQLVTNSGFPIIPEINIPSNSTNINIARDGVISVVVQGQTQPVLLGQLNLINFVNNSGLESLGENLYQETQASGSPIETTPGLNGTGVLYQGYVETSNVNVAEELVNMIQTQRAYEINSKSISTSDQMLQKLSQL</sequence>
<feature type="chain" id="PRO_0000180845" description="Flagellar basal-body rod protein FlgG">
    <location>
        <begin position="1"/>
        <end position="260"/>
    </location>
</feature>
<reference key="1">
    <citation type="journal article" date="2000" name="Nature">
        <title>Genome sequence of the endocellular bacterial symbiont of aphids Buchnera sp. APS.</title>
        <authorList>
            <person name="Shigenobu S."/>
            <person name="Watanabe H."/>
            <person name="Hattori M."/>
            <person name="Sakaki Y."/>
            <person name="Ishikawa H."/>
        </authorList>
    </citation>
    <scope>NUCLEOTIDE SEQUENCE [LARGE SCALE GENOMIC DNA]</scope>
    <source>
        <strain>APS</strain>
    </source>
</reference>
<protein>
    <recommendedName>
        <fullName>Flagellar basal-body rod protein FlgG</fullName>
    </recommendedName>
    <alternativeName>
        <fullName>Distal rod protein</fullName>
    </alternativeName>
</protein>
<gene>
    <name type="primary">flgG</name>
    <name type="ordered locus">BU342</name>
</gene>
<organism>
    <name type="scientific">Buchnera aphidicola subsp. Acyrthosiphon pisum (strain APS)</name>
    <name type="common">Acyrthosiphon pisum symbiotic bacterium</name>
    <dbReference type="NCBI Taxonomy" id="107806"/>
    <lineage>
        <taxon>Bacteria</taxon>
        <taxon>Pseudomonadati</taxon>
        <taxon>Pseudomonadota</taxon>
        <taxon>Gammaproteobacteria</taxon>
        <taxon>Enterobacterales</taxon>
        <taxon>Erwiniaceae</taxon>
        <taxon>Buchnera</taxon>
    </lineage>
</organism>